<comment type="function">
    <text evidence="1">Catalyzes the conversion of glucosamine-6-phosphate to glucosamine-1-phosphate.</text>
</comment>
<comment type="catalytic activity">
    <reaction evidence="1">
        <text>alpha-D-glucosamine 1-phosphate = D-glucosamine 6-phosphate</text>
        <dbReference type="Rhea" id="RHEA:23424"/>
        <dbReference type="ChEBI" id="CHEBI:58516"/>
        <dbReference type="ChEBI" id="CHEBI:58725"/>
        <dbReference type="EC" id="5.4.2.10"/>
    </reaction>
</comment>
<comment type="cofactor">
    <cofactor evidence="1">
        <name>Mg(2+)</name>
        <dbReference type="ChEBI" id="CHEBI:18420"/>
    </cofactor>
    <text evidence="1">Binds 1 Mg(2+) ion per subunit.</text>
</comment>
<comment type="PTM">
    <text evidence="1">Activated by phosphorylation.</text>
</comment>
<comment type="similarity">
    <text evidence="1">Belongs to the phosphohexose mutase family.</text>
</comment>
<dbReference type="EC" id="5.4.2.10" evidence="1"/>
<dbReference type="EMBL" id="CP000753">
    <property type="protein sequence ID" value="ABS09022.1"/>
    <property type="molecule type" value="Genomic_DNA"/>
</dbReference>
<dbReference type="RefSeq" id="WP_012089672.1">
    <property type="nucleotide sequence ID" value="NC_009665.1"/>
</dbReference>
<dbReference type="SMR" id="A6WQD3"/>
<dbReference type="KEGG" id="sbm:Shew185_2888"/>
<dbReference type="HOGENOM" id="CLU_016950_7_0_6"/>
<dbReference type="GO" id="GO:0005829">
    <property type="term" value="C:cytosol"/>
    <property type="evidence" value="ECO:0007669"/>
    <property type="project" value="TreeGrafter"/>
</dbReference>
<dbReference type="GO" id="GO:0000287">
    <property type="term" value="F:magnesium ion binding"/>
    <property type="evidence" value="ECO:0007669"/>
    <property type="project" value="UniProtKB-UniRule"/>
</dbReference>
<dbReference type="GO" id="GO:0008966">
    <property type="term" value="F:phosphoglucosamine mutase activity"/>
    <property type="evidence" value="ECO:0007669"/>
    <property type="project" value="UniProtKB-UniRule"/>
</dbReference>
<dbReference type="GO" id="GO:0004615">
    <property type="term" value="F:phosphomannomutase activity"/>
    <property type="evidence" value="ECO:0007669"/>
    <property type="project" value="TreeGrafter"/>
</dbReference>
<dbReference type="GO" id="GO:0005975">
    <property type="term" value="P:carbohydrate metabolic process"/>
    <property type="evidence" value="ECO:0007669"/>
    <property type="project" value="InterPro"/>
</dbReference>
<dbReference type="GO" id="GO:0009252">
    <property type="term" value="P:peptidoglycan biosynthetic process"/>
    <property type="evidence" value="ECO:0007669"/>
    <property type="project" value="TreeGrafter"/>
</dbReference>
<dbReference type="GO" id="GO:0006048">
    <property type="term" value="P:UDP-N-acetylglucosamine biosynthetic process"/>
    <property type="evidence" value="ECO:0007669"/>
    <property type="project" value="TreeGrafter"/>
</dbReference>
<dbReference type="CDD" id="cd05802">
    <property type="entry name" value="GlmM"/>
    <property type="match status" value="1"/>
</dbReference>
<dbReference type="FunFam" id="3.30.310.50:FF:000001">
    <property type="entry name" value="Phosphoglucosamine mutase"/>
    <property type="match status" value="1"/>
</dbReference>
<dbReference type="FunFam" id="3.40.120.10:FF:000001">
    <property type="entry name" value="Phosphoglucosamine mutase"/>
    <property type="match status" value="1"/>
</dbReference>
<dbReference type="FunFam" id="3.40.120.10:FF:000003">
    <property type="entry name" value="Phosphoglucosamine mutase"/>
    <property type="match status" value="1"/>
</dbReference>
<dbReference type="Gene3D" id="3.40.120.10">
    <property type="entry name" value="Alpha-D-Glucose-1,6-Bisphosphate, subunit A, domain 3"/>
    <property type="match status" value="3"/>
</dbReference>
<dbReference type="Gene3D" id="3.30.310.50">
    <property type="entry name" value="Alpha-D-phosphohexomutase, C-terminal domain"/>
    <property type="match status" value="1"/>
</dbReference>
<dbReference type="HAMAP" id="MF_01554_B">
    <property type="entry name" value="GlmM_B"/>
    <property type="match status" value="1"/>
</dbReference>
<dbReference type="InterPro" id="IPR005844">
    <property type="entry name" value="A-D-PHexomutase_a/b/a-I"/>
</dbReference>
<dbReference type="InterPro" id="IPR016055">
    <property type="entry name" value="A-D-PHexomutase_a/b/a-I/II/III"/>
</dbReference>
<dbReference type="InterPro" id="IPR005845">
    <property type="entry name" value="A-D-PHexomutase_a/b/a-II"/>
</dbReference>
<dbReference type="InterPro" id="IPR005846">
    <property type="entry name" value="A-D-PHexomutase_a/b/a-III"/>
</dbReference>
<dbReference type="InterPro" id="IPR005843">
    <property type="entry name" value="A-D-PHexomutase_C"/>
</dbReference>
<dbReference type="InterPro" id="IPR036900">
    <property type="entry name" value="A-D-PHexomutase_C_sf"/>
</dbReference>
<dbReference type="InterPro" id="IPR016066">
    <property type="entry name" value="A-D-PHexomutase_CS"/>
</dbReference>
<dbReference type="InterPro" id="IPR005841">
    <property type="entry name" value="Alpha-D-phosphohexomutase_SF"/>
</dbReference>
<dbReference type="InterPro" id="IPR006352">
    <property type="entry name" value="GlmM_bact"/>
</dbReference>
<dbReference type="InterPro" id="IPR050060">
    <property type="entry name" value="Phosphoglucosamine_mutase"/>
</dbReference>
<dbReference type="NCBIfam" id="TIGR01455">
    <property type="entry name" value="glmM"/>
    <property type="match status" value="1"/>
</dbReference>
<dbReference type="NCBIfam" id="NF008139">
    <property type="entry name" value="PRK10887.1"/>
    <property type="match status" value="1"/>
</dbReference>
<dbReference type="PANTHER" id="PTHR42946:SF1">
    <property type="entry name" value="PHOSPHOGLUCOMUTASE (ALPHA-D-GLUCOSE-1,6-BISPHOSPHATE-DEPENDENT)"/>
    <property type="match status" value="1"/>
</dbReference>
<dbReference type="PANTHER" id="PTHR42946">
    <property type="entry name" value="PHOSPHOHEXOSE MUTASE"/>
    <property type="match status" value="1"/>
</dbReference>
<dbReference type="Pfam" id="PF02878">
    <property type="entry name" value="PGM_PMM_I"/>
    <property type="match status" value="1"/>
</dbReference>
<dbReference type="Pfam" id="PF02879">
    <property type="entry name" value="PGM_PMM_II"/>
    <property type="match status" value="1"/>
</dbReference>
<dbReference type="Pfam" id="PF02880">
    <property type="entry name" value="PGM_PMM_III"/>
    <property type="match status" value="1"/>
</dbReference>
<dbReference type="Pfam" id="PF00408">
    <property type="entry name" value="PGM_PMM_IV"/>
    <property type="match status" value="1"/>
</dbReference>
<dbReference type="PRINTS" id="PR00509">
    <property type="entry name" value="PGMPMM"/>
</dbReference>
<dbReference type="SUPFAM" id="SSF55957">
    <property type="entry name" value="Phosphoglucomutase, C-terminal domain"/>
    <property type="match status" value="1"/>
</dbReference>
<dbReference type="SUPFAM" id="SSF53738">
    <property type="entry name" value="Phosphoglucomutase, first 3 domains"/>
    <property type="match status" value="3"/>
</dbReference>
<dbReference type="PROSITE" id="PS00710">
    <property type="entry name" value="PGM_PMM"/>
    <property type="match status" value="1"/>
</dbReference>
<evidence type="ECO:0000255" key="1">
    <source>
        <dbReference type="HAMAP-Rule" id="MF_01554"/>
    </source>
</evidence>
<keyword id="KW-0413">Isomerase</keyword>
<keyword id="KW-0460">Magnesium</keyword>
<keyword id="KW-0479">Metal-binding</keyword>
<keyword id="KW-0597">Phosphoprotein</keyword>
<sequence length="450" mass="47851">MSRKYFGTDGVRGKVGEFPITPDFAMKLGWAAGTVLASTGTKEVLIGKDTRSSGYMLESAMEAGFSAAGVNVALIGPMPTPAVAYLASTFRADAGVVISASHNPFYDNGIKFFSNSGTKLNDAQELEIEALLEKALNQNAMQCVASEKLGKVRRIDDAAGRYIEFCKGTFPNHLSLAGLKIVIDSAHGAAYHIAPNVYRELGAEVISINDKPNGVNINDHCGATHLDSLQTAVMVHEADLGIALDGDADRVMFVDHNGHVVDGDEILFILAQAAHSKGEMTGGVVGTLMSNLGLELALKQMDIPFVRAKVGDRYVVEQLKRTGWQLGGEGSGHILSLQHASTGDGIVASLQVLKAVLESQKSLSEIKAGMTKLPQVLINVRLATADADSILATTSVKQAVIKAEEFLGDQGRVLLRKSGTEPLIRVMVESTDNIMTQTQAEYIADAVRAA</sequence>
<name>GLMM2_SHEB8</name>
<protein>
    <recommendedName>
        <fullName evidence="1">Phosphoglucosamine mutase 2</fullName>
        <ecNumber evidence="1">5.4.2.10</ecNumber>
    </recommendedName>
</protein>
<feature type="chain" id="PRO_0000343598" description="Phosphoglucosamine mutase 2">
    <location>
        <begin position="1"/>
        <end position="450"/>
    </location>
</feature>
<feature type="active site" description="Phosphoserine intermediate" evidence="1">
    <location>
        <position position="101"/>
    </location>
</feature>
<feature type="binding site" description="via phosphate group" evidence="1">
    <location>
        <position position="101"/>
    </location>
    <ligand>
        <name>Mg(2+)</name>
        <dbReference type="ChEBI" id="CHEBI:18420"/>
    </ligand>
</feature>
<feature type="binding site" evidence="1">
    <location>
        <position position="245"/>
    </location>
    <ligand>
        <name>Mg(2+)</name>
        <dbReference type="ChEBI" id="CHEBI:18420"/>
    </ligand>
</feature>
<feature type="binding site" evidence="1">
    <location>
        <position position="247"/>
    </location>
    <ligand>
        <name>Mg(2+)</name>
        <dbReference type="ChEBI" id="CHEBI:18420"/>
    </ligand>
</feature>
<feature type="binding site" evidence="1">
    <location>
        <position position="249"/>
    </location>
    <ligand>
        <name>Mg(2+)</name>
        <dbReference type="ChEBI" id="CHEBI:18420"/>
    </ligand>
</feature>
<feature type="modified residue" description="Phosphoserine" evidence="1">
    <location>
        <position position="101"/>
    </location>
</feature>
<organism>
    <name type="scientific">Shewanella baltica (strain OS185)</name>
    <dbReference type="NCBI Taxonomy" id="402882"/>
    <lineage>
        <taxon>Bacteria</taxon>
        <taxon>Pseudomonadati</taxon>
        <taxon>Pseudomonadota</taxon>
        <taxon>Gammaproteobacteria</taxon>
        <taxon>Alteromonadales</taxon>
        <taxon>Shewanellaceae</taxon>
        <taxon>Shewanella</taxon>
    </lineage>
</organism>
<gene>
    <name evidence="1" type="primary">glmM2</name>
    <name type="ordered locus">Shew185_2888</name>
</gene>
<reference key="1">
    <citation type="submission" date="2007-07" db="EMBL/GenBank/DDBJ databases">
        <title>Complete sequence of chromosome of Shewanella baltica OS185.</title>
        <authorList>
            <consortium name="US DOE Joint Genome Institute"/>
            <person name="Copeland A."/>
            <person name="Lucas S."/>
            <person name="Lapidus A."/>
            <person name="Barry K."/>
            <person name="Glavina del Rio T."/>
            <person name="Dalin E."/>
            <person name="Tice H."/>
            <person name="Pitluck S."/>
            <person name="Sims D."/>
            <person name="Brettin T."/>
            <person name="Bruce D."/>
            <person name="Detter J.C."/>
            <person name="Han C."/>
            <person name="Schmutz J."/>
            <person name="Larimer F."/>
            <person name="Land M."/>
            <person name="Hauser L."/>
            <person name="Kyrpides N."/>
            <person name="Mikhailova N."/>
            <person name="Brettar I."/>
            <person name="Rodrigues J."/>
            <person name="Konstantinidis K."/>
            <person name="Tiedje J."/>
            <person name="Richardson P."/>
        </authorList>
    </citation>
    <scope>NUCLEOTIDE SEQUENCE [LARGE SCALE GENOMIC DNA]</scope>
    <source>
        <strain>OS185</strain>
    </source>
</reference>
<proteinExistence type="inferred from homology"/>
<accession>A6WQD3</accession>